<organism>
    <name type="scientific">Granulibacter bethesdensis (strain ATCC BAA-1260 / CGDNIH1)</name>
    <dbReference type="NCBI Taxonomy" id="391165"/>
    <lineage>
        <taxon>Bacteria</taxon>
        <taxon>Pseudomonadati</taxon>
        <taxon>Pseudomonadota</taxon>
        <taxon>Alphaproteobacteria</taxon>
        <taxon>Acetobacterales</taxon>
        <taxon>Acetobacteraceae</taxon>
        <taxon>Granulibacter</taxon>
    </lineage>
</organism>
<keyword id="KW-1185">Reference proteome</keyword>
<feature type="chain" id="PRO_0000336185" description="UPF0102 protein GbCGDNIH1_0975">
    <location>
        <begin position="1"/>
        <end position="158"/>
    </location>
</feature>
<accession>Q0BTH9</accession>
<name>Y975_GRABC</name>
<reference key="1">
    <citation type="journal article" date="2007" name="J. Bacteriol.">
        <title>Genome sequence analysis of the emerging human pathogenic acetic acid bacterium Granulibacter bethesdensis.</title>
        <authorList>
            <person name="Greenberg D.E."/>
            <person name="Porcella S.F."/>
            <person name="Zelazny A.M."/>
            <person name="Virtaneva K."/>
            <person name="Sturdevant D.E."/>
            <person name="Kupko J.J. III"/>
            <person name="Barbian K.D."/>
            <person name="Babar A."/>
            <person name="Dorward D.W."/>
            <person name="Holland S.M."/>
        </authorList>
    </citation>
    <scope>NUCLEOTIDE SEQUENCE [LARGE SCALE GENOMIC DNA]</scope>
    <source>
        <strain>ATCC BAA-1260 / CGDNIH1</strain>
    </source>
</reference>
<proteinExistence type="inferred from homology"/>
<evidence type="ECO:0000255" key="1">
    <source>
        <dbReference type="HAMAP-Rule" id="MF_00048"/>
    </source>
</evidence>
<dbReference type="EMBL" id="CP000394">
    <property type="protein sequence ID" value="ABI61873.1"/>
    <property type="molecule type" value="Genomic_DNA"/>
</dbReference>
<dbReference type="RefSeq" id="WP_011631682.1">
    <property type="nucleotide sequence ID" value="NC_008343.2"/>
</dbReference>
<dbReference type="SMR" id="Q0BTH9"/>
<dbReference type="STRING" id="391165.GbCGDNIH1_0975"/>
<dbReference type="GeneID" id="69745235"/>
<dbReference type="KEGG" id="gbe:GbCGDNIH1_0975"/>
<dbReference type="eggNOG" id="COG0792">
    <property type="taxonomic scope" value="Bacteria"/>
</dbReference>
<dbReference type="HOGENOM" id="CLU_115353_0_0_5"/>
<dbReference type="OrthoDB" id="9812968at2"/>
<dbReference type="Proteomes" id="UP000001963">
    <property type="component" value="Chromosome"/>
</dbReference>
<dbReference type="GO" id="GO:0003676">
    <property type="term" value="F:nucleic acid binding"/>
    <property type="evidence" value="ECO:0007669"/>
    <property type="project" value="InterPro"/>
</dbReference>
<dbReference type="Gene3D" id="3.40.1350.10">
    <property type="match status" value="1"/>
</dbReference>
<dbReference type="HAMAP" id="MF_00048">
    <property type="entry name" value="UPF0102"/>
    <property type="match status" value="1"/>
</dbReference>
<dbReference type="InterPro" id="IPR011335">
    <property type="entry name" value="Restrct_endonuc-II-like"/>
</dbReference>
<dbReference type="InterPro" id="IPR011856">
    <property type="entry name" value="tRNA_endonuc-like_dom_sf"/>
</dbReference>
<dbReference type="InterPro" id="IPR003509">
    <property type="entry name" value="UPF0102_YraN-like"/>
</dbReference>
<dbReference type="PANTHER" id="PTHR34039">
    <property type="entry name" value="UPF0102 PROTEIN YRAN"/>
    <property type="match status" value="1"/>
</dbReference>
<dbReference type="PANTHER" id="PTHR34039:SF1">
    <property type="entry name" value="UPF0102 PROTEIN YRAN"/>
    <property type="match status" value="1"/>
</dbReference>
<dbReference type="Pfam" id="PF02021">
    <property type="entry name" value="UPF0102"/>
    <property type="match status" value="1"/>
</dbReference>
<dbReference type="SUPFAM" id="SSF52980">
    <property type="entry name" value="Restriction endonuclease-like"/>
    <property type="match status" value="1"/>
</dbReference>
<comment type="similarity">
    <text evidence="1">Belongs to the UPF0102 family.</text>
</comment>
<gene>
    <name type="ordered locus">GbCGDNIH1_0975</name>
</gene>
<sequence>MNKKKDDCGGLSLPSDSVFCSLHANDSIWQHDKKVLRGGKASRDGLEAERIAAQALEADGWQILGRRLRTSAGEIDILAEMDGLLAIVEVKYRPTLSEAAHALGPRQRKRLIAAASYVLAQHPEYGTEGVRFDVIVVDMAGQVRRITDAFRLDEEGWP</sequence>
<protein>
    <recommendedName>
        <fullName evidence="1">UPF0102 protein GbCGDNIH1_0975</fullName>
    </recommendedName>
</protein>